<sequence>MPRDNMASLIQRIARQACLTFRGSGGGRGASDRDAASGPEAPMQPGFPENLSKLKSLLTQLRAEDLNIAPRKATLQPLPPNLPPVTYMHIYETDGFSLGVFLLKSGTSIPLHDHPGMHGMLKVLYGTVRISCMDKLDAGGGQRPRALPPEQQFEPPLQPREREAVRPGVLRSRAEYTEASGPCILTPHRDNLHQIDAVEGPAAFLDILAPPYDPDDGRDCHYYRVLEPVRPKEASSSACDLPREVWLLETPQADDFWCEGEPYPGPKVFP</sequence>
<organism>
    <name type="scientific">Homo sapiens</name>
    <name type="common">Human</name>
    <dbReference type="NCBI Taxonomy" id="9606"/>
    <lineage>
        <taxon>Eukaryota</taxon>
        <taxon>Metazoa</taxon>
        <taxon>Chordata</taxon>
        <taxon>Craniata</taxon>
        <taxon>Vertebrata</taxon>
        <taxon>Euteleostomi</taxon>
        <taxon>Mammalia</taxon>
        <taxon>Eutheria</taxon>
        <taxon>Euarchontoglires</taxon>
        <taxon>Primates</taxon>
        <taxon>Haplorrhini</taxon>
        <taxon>Catarrhini</taxon>
        <taxon>Hominidae</taxon>
        <taxon>Homo</taxon>
    </lineage>
</organism>
<proteinExistence type="evidence at protein level"/>
<gene>
    <name type="primary">ADO</name>
    <name type="synonym">C10orf22</name>
</gene>
<dbReference type="EC" id="1.13.11.19" evidence="4 5 7"/>
<dbReference type="EMBL" id="AL133417">
    <property type="status" value="NOT_ANNOTATED_CDS"/>
    <property type="molecule type" value="Genomic_DNA"/>
</dbReference>
<dbReference type="EMBL" id="CH471083">
    <property type="protein sequence ID" value="EAW54235.1"/>
    <property type="molecule type" value="Genomic_DNA"/>
</dbReference>
<dbReference type="EMBL" id="BC018660">
    <property type="protein sequence ID" value="AAH18660.3"/>
    <property type="molecule type" value="mRNA"/>
</dbReference>
<dbReference type="EMBL" id="BC028589">
    <property type="protein sequence ID" value="AAH28589.2"/>
    <property type="molecule type" value="mRNA"/>
</dbReference>
<dbReference type="EMBL" id="BC067740">
    <property type="protein sequence ID" value="AAH67740.2"/>
    <property type="molecule type" value="mRNA"/>
</dbReference>
<dbReference type="EMBL" id="AK027453">
    <property type="protein sequence ID" value="BAB55123.1"/>
    <property type="status" value="ALT_INIT"/>
    <property type="molecule type" value="mRNA"/>
</dbReference>
<dbReference type="CCDS" id="CCDS7266.2"/>
<dbReference type="RefSeq" id="NP_116193.2">
    <property type="nucleotide sequence ID" value="NM_032804.6"/>
</dbReference>
<dbReference type="PDB" id="7REI">
    <property type="method" value="X-ray"/>
    <property type="resolution" value="1.78 A"/>
    <property type="chains" value="A=1-270"/>
</dbReference>
<dbReference type="PDB" id="8U9J">
    <property type="method" value="X-ray"/>
    <property type="resolution" value="2.02 A"/>
    <property type="chains" value="A/B=2-270"/>
</dbReference>
<dbReference type="PDB" id="8UAN">
    <property type="method" value="X-ray"/>
    <property type="resolution" value="1.99 A"/>
    <property type="chains" value="A=2-270"/>
</dbReference>
<dbReference type="PDBsum" id="7REI"/>
<dbReference type="PDBsum" id="8U9J"/>
<dbReference type="PDBsum" id="8UAN"/>
<dbReference type="SMR" id="Q96SZ5"/>
<dbReference type="BioGRID" id="124330">
    <property type="interactions" value="22"/>
</dbReference>
<dbReference type="FunCoup" id="Q96SZ5">
    <property type="interactions" value="1140"/>
</dbReference>
<dbReference type="IntAct" id="Q96SZ5">
    <property type="interactions" value="15"/>
</dbReference>
<dbReference type="STRING" id="9606.ENSP00000362888"/>
<dbReference type="GlyGen" id="Q96SZ5">
    <property type="glycosylation" value="1 site, 1 O-linked glycan (1 site)"/>
</dbReference>
<dbReference type="iPTMnet" id="Q96SZ5"/>
<dbReference type="MetOSite" id="Q96SZ5"/>
<dbReference type="PhosphoSitePlus" id="Q96SZ5"/>
<dbReference type="BioMuta" id="ADO"/>
<dbReference type="DMDM" id="88984104"/>
<dbReference type="jPOST" id="Q96SZ5"/>
<dbReference type="MassIVE" id="Q96SZ5"/>
<dbReference type="PaxDb" id="9606-ENSP00000362888"/>
<dbReference type="PeptideAtlas" id="Q96SZ5"/>
<dbReference type="ProteomicsDB" id="78164"/>
<dbReference type="Pumba" id="Q96SZ5"/>
<dbReference type="Antibodypedia" id="45164">
    <property type="antibodies" value="187 antibodies from 25 providers"/>
</dbReference>
<dbReference type="DNASU" id="84890"/>
<dbReference type="Ensembl" id="ENST00000373783.3">
    <property type="protein sequence ID" value="ENSP00000362888.1"/>
    <property type="gene ID" value="ENSG00000181915.6"/>
</dbReference>
<dbReference type="GeneID" id="84890"/>
<dbReference type="KEGG" id="hsa:84890"/>
<dbReference type="MANE-Select" id="ENST00000373783.3">
    <property type="protein sequence ID" value="ENSP00000362888.1"/>
    <property type="RefSeq nucleotide sequence ID" value="NM_032804.6"/>
    <property type="RefSeq protein sequence ID" value="NP_116193.2"/>
</dbReference>
<dbReference type="UCSC" id="uc001jmg.4">
    <property type="organism name" value="human"/>
</dbReference>
<dbReference type="AGR" id="HGNC:23506"/>
<dbReference type="CTD" id="84890"/>
<dbReference type="DisGeNET" id="84890"/>
<dbReference type="GeneCards" id="ADO"/>
<dbReference type="HGNC" id="HGNC:23506">
    <property type="gene designation" value="ADO"/>
</dbReference>
<dbReference type="HPA" id="ENSG00000181915">
    <property type="expression patterns" value="Low tissue specificity"/>
</dbReference>
<dbReference type="MIM" id="611392">
    <property type="type" value="gene"/>
</dbReference>
<dbReference type="neXtProt" id="NX_Q96SZ5"/>
<dbReference type="OpenTargets" id="ENSG00000181915"/>
<dbReference type="PharmGKB" id="PA162375713"/>
<dbReference type="VEuPathDB" id="HostDB:ENSG00000181915"/>
<dbReference type="eggNOG" id="KOG4281">
    <property type="taxonomic scope" value="Eukaryota"/>
</dbReference>
<dbReference type="GeneTree" id="ENSGT00390000014082"/>
<dbReference type="HOGENOM" id="CLU_061320_2_1_1"/>
<dbReference type="InParanoid" id="Q96SZ5"/>
<dbReference type="OMA" id="RCIWGKL"/>
<dbReference type="OrthoDB" id="271433at2759"/>
<dbReference type="PAN-GO" id="Q96SZ5">
    <property type="GO annotations" value="0 GO annotations based on evolutionary models"/>
</dbReference>
<dbReference type="PhylomeDB" id="Q96SZ5"/>
<dbReference type="TreeFam" id="TF314673"/>
<dbReference type="BioCyc" id="MetaCyc:HS17749-MONOMER"/>
<dbReference type="BRENDA" id="1.13.11.19">
    <property type="organism ID" value="2681"/>
</dbReference>
<dbReference type="PathwayCommons" id="Q96SZ5"/>
<dbReference type="Reactome" id="R-HSA-1614558">
    <property type="pathway name" value="Degradation of cysteine and homocysteine"/>
</dbReference>
<dbReference type="SignaLink" id="Q96SZ5"/>
<dbReference type="BioGRID-ORCS" id="84890">
    <property type="hits" value="50 hits in 1156 CRISPR screens"/>
</dbReference>
<dbReference type="ChiTaRS" id="ADO">
    <property type="organism name" value="human"/>
</dbReference>
<dbReference type="GenomeRNAi" id="84890"/>
<dbReference type="Pharos" id="Q96SZ5">
    <property type="development level" value="Tbio"/>
</dbReference>
<dbReference type="PRO" id="PR:Q96SZ5"/>
<dbReference type="Proteomes" id="UP000005640">
    <property type="component" value="Chromosome 10"/>
</dbReference>
<dbReference type="RNAct" id="Q96SZ5">
    <property type="molecule type" value="protein"/>
</dbReference>
<dbReference type="Bgee" id="ENSG00000181915">
    <property type="expression patterns" value="Expressed in sperm and 210 other cell types or tissues"/>
</dbReference>
<dbReference type="GO" id="GO:0005829">
    <property type="term" value="C:cytosol"/>
    <property type="evidence" value="ECO:0000304"/>
    <property type="project" value="Reactome"/>
</dbReference>
<dbReference type="GO" id="GO:0005739">
    <property type="term" value="C:mitochondrion"/>
    <property type="evidence" value="ECO:0006056"/>
    <property type="project" value="FlyBase"/>
</dbReference>
<dbReference type="GO" id="GO:0047800">
    <property type="term" value="F:cysteamine dioxygenase activity"/>
    <property type="evidence" value="ECO:0000314"/>
    <property type="project" value="UniProtKB"/>
</dbReference>
<dbReference type="GO" id="GO:0005506">
    <property type="term" value="F:iron ion binding"/>
    <property type="evidence" value="ECO:0000314"/>
    <property type="project" value="UniProtKB"/>
</dbReference>
<dbReference type="GO" id="GO:0071456">
    <property type="term" value="P:cellular response to hypoxia"/>
    <property type="evidence" value="ECO:0000314"/>
    <property type="project" value="UniProtKB"/>
</dbReference>
<dbReference type="CDD" id="cd20289">
    <property type="entry name" value="cupin_ADO"/>
    <property type="match status" value="1"/>
</dbReference>
<dbReference type="FunFam" id="2.60.120.10:FF:000096">
    <property type="entry name" value="2-aminoethanethiol dioxygenase"/>
    <property type="match status" value="1"/>
</dbReference>
<dbReference type="Gene3D" id="2.60.120.10">
    <property type="entry name" value="Jelly Rolls"/>
    <property type="match status" value="1"/>
</dbReference>
<dbReference type="InterPro" id="IPR012864">
    <property type="entry name" value="PCO/ADO"/>
</dbReference>
<dbReference type="InterPro" id="IPR014710">
    <property type="entry name" value="RmlC-like_jellyroll"/>
</dbReference>
<dbReference type="InterPro" id="IPR011051">
    <property type="entry name" value="RmlC_Cupin_sf"/>
</dbReference>
<dbReference type="PANTHER" id="PTHR22966">
    <property type="entry name" value="2-AMINOETHANETHIOL DIOXYGENASE"/>
    <property type="match status" value="1"/>
</dbReference>
<dbReference type="PANTHER" id="PTHR22966:SF61">
    <property type="entry name" value="2-AMINOETHANETHIOL DIOXYGENASE"/>
    <property type="match status" value="1"/>
</dbReference>
<dbReference type="Pfam" id="PF07847">
    <property type="entry name" value="PCO_ADO"/>
    <property type="match status" value="1"/>
</dbReference>
<dbReference type="SUPFAM" id="SSF51182">
    <property type="entry name" value="RmlC-like cupins"/>
    <property type="match status" value="1"/>
</dbReference>
<feature type="chain" id="PRO_0000089784" description="2-aminoethanethiol dioxygenase">
    <location>
        <begin position="1"/>
        <end position="270"/>
    </location>
</feature>
<feature type="region of interest" description="Disordered" evidence="1">
    <location>
        <begin position="21"/>
        <end position="48"/>
    </location>
</feature>
<feature type="region of interest" description="Disordered" evidence="1">
    <location>
        <begin position="140"/>
        <end position="164"/>
    </location>
</feature>
<feature type="binding site" evidence="8 12">
    <location>
        <position position="112"/>
    </location>
    <ligand>
        <name>Fe cation</name>
        <dbReference type="ChEBI" id="CHEBI:24875"/>
        <note>catalytic</note>
    </ligand>
</feature>
<feature type="binding site" evidence="8 12">
    <location>
        <position position="114"/>
    </location>
    <ligand>
        <name>Fe cation</name>
        <dbReference type="ChEBI" id="CHEBI:24875"/>
        <note>catalytic</note>
    </ligand>
</feature>
<feature type="binding site" evidence="8 12">
    <location>
        <position position="193"/>
    </location>
    <ligand>
        <name>Fe cation</name>
        <dbReference type="ChEBI" id="CHEBI:24875"/>
        <note>catalytic</note>
    </ligand>
</feature>
<feature type="cross-link" description="3'-(S-cysteinyl)-tyrosine (Cys-Tyr)" evidence="5">
    <location>
        <begin position="220"/>
        <end position="223"/>
    </location>
</feature>
<feature type="sequence variant" id="VAR_025333" description="In dbSNP:rs2236295." evidence="3">
    <original>G</original>
    <variation>W</variation>
    <location>
        <position position="25"/>
    </location>
</feature>
<feature type="sequence variant" id="VAR_025334" description="In dbSNP:rs10995311." evidence="2 3">
    <original>P</original>
    <variation>A</variation>
    <location>
        <position position="39"/>
    </location>
</feature>
<feature type="sequence variant" id="VAR_033691" description="In dbSNP:rs569705.">
    <original>P</original>
    <variation>S</variation>
    <location>
        <position position="266"/>
    </location>
</feature>
<feature type="mutagenesis site" description="Moderate reduction in enzyme activity." evidence="5">
    <original>Y</original>
    <variation>A</variation>
    <location>
        <position position="87"/>
    </location>
</feature>
<feature type="mutagenesis site" description="Significant reduction in enzyme activity." evidence="5">
    <original>Y</original>
    <variation>A</variation>
    <variation>F</variation>
    <location>
        <position position="222"/>
    </location>
</feature>
<feature type="mutagenesis site" description="No significant reduction in enzyme activity." evidence="5">
    <original>Y</original>
    <variation>A</variation>
    <location>
        <position position="223"/>
    </location>
</feature>
<feature type="helix" evidence="13">
    <location>
        <begin position="9"/>
        <end position="21"/>
    </location>
</feature>
<feature type="helix" evidence="13">
    <location>
        <begin position="47"/>
        <end position="60"/>
    </location>
</feature>
<feature type="helix" evidence="13">
    <location>
        <begin position="63"/>
        <end position="66"/>
    </location>
</feature>
<feature type="strand" evidence="13">
    <location>
        <begin position="84"/>
        <end position="92"/>
    </location>
</feature>
<feature type="strand" evidence="13">
    <location>
        <begin position="97"/>
        <end position="103"/>
    </location>
</feature>
<feature type="strand" evidence="13">
    <location>
        <begin position="108"/>
        <end position="112"/>
    </location>
</feature>
<feature type="strand" evidence="13">
    <location>
        <begin position="118"/>
        <end position="135"/>
    </location>
</feature>
<feature type="helix" evidence="13">
    <location>
        <begin position="138"/>
        <end position="140"/>
    </location>
</feature>
<feature type="strand" evidence="13">
    <location>
        <begin position="153"/>
        <end position="155"/>
    </location>
</feature>
<feature type="helix" evidence="13">
    <location>
        <begin position="159"/>
        <end position="164"/>
    </location>
</feature>
<feature type="strand" evidence="13">
    <location>
        <begin position="166"/>
        <end position="176"/>
    </location>
</feature>
<feature type="strand" evidence="13">
    <location>
        <begin position="183"/>
        <end position="186"/>
    </location>
</feature>
<feature type="strand" evidence="13">
    <location>
        <begin position="192"/>
        <end position="210"/>
    </location>
</feature>
<feature type="helix" evidence="13">
    <location>
        <begin position="214"/>
        <end position="216"/>
    </location>
</feature>
<feature type="strand" evidence="13">
    <location>
        <begin position="222"/>
        <end position="225"/>
    </location>
</feature>
<feature type="strand" evidence="13">
    <location>
        <begin position="241"/>
        <end position="250"/>
    </location>
</feature>
<feature type="strand" evidence="13">
    <location>
        <begin position="258"/>
        <end position="260"/>
    </location>
</feature>
<accession>Q96SZ5</accession>
<accession>B1AL29</accession>
<evidence type="ECO:0000256" key="1">
    <source>
        <dbReference type="SAM" id="MobiDB-lite"/>
    </source>
</evidence>
<evidence type="ECO:0000269" key="2">
    <source>
    </source>
</evidence>
<evidence type="ECO:0000269" key="3">
    <source>
    </source>
</evidence>
<evidence type="ECO:0000269" key="4">
    <source>
    </source>
</evidence>
<evidence type="ECO:0000269" key="5">
    <source>
    </source>
</evidence>
<evidence type="ECO:0000269" key="6">
    <source>
    </source>
</evidence>
<evidence type="ECO:0000269" key="7">
    <source>
    </source>
</evidence>
<evidence type="ECO:0000269" key="8">
    <source>
    </source>
</evidence>
<evidence type="ECO:0000305" key="9"/>
<evidence type="ECO:0000305" key="10">
    <source>
    </source>
</evidence>
<evidence type="ECO:0000305" key="11">
    <source>
    </source>
</evidence>
<evidence type="ECO:0007744" key="12">
    <source>
        <dbReference type="PDB" id="7REI"/>
    </source>
</evidence>
<evidence type="ECO:0007829" key="13">
    <source>
        <dbReference type="PDB" id="7REI"/>
    </source>
</evidence>
<comment type="function">
    <text evidence="4 5 6 7">Plays a vital role in regulating thiol metabolism and preserving oxygen homeostasis by oxidizing the sulfur of cysteamine and N-terminal cysteine-containing proteins to their corresponding sulfinic acids using O2 as a cosubstrate (PubMed:17581819, PubMed:29752763, PubMed:31273118, PubMed:32601061). Catalyzes the oxidation of cysteamine (2-aminoethanethiol) to hypotaurine (PubMed:17581819, PubMed:29752763, PubMed:32601061). Catalyzes the oxidation of regulators of G-protein signaling 4 (RGS4) and 5 (RGS5) and interleukin-32 (IL32) (PubMed:31273118, PubMed:32601061).</text>
</comment>
<comment type="catalytic activity">
    <reaction evidence="4 5 7">
        <text>cysteamine + O2 = hypotaurine + H(+)</text>
        <dbReference type="Rhea" id="RHEA:14409"/>
        <dbReference type="ChEBI" id="CHEBI:15378"/>
        <dbReference type="ChEBI" id="CHEBI:15379"/>
        <dbReference type="ChEBI" id="CHEBI:57853"/>
        <dbReference type="ChEBI" id="CHEBI:58029"/>
        <dbReference type="EC" id="1.13.11.19"/>
    </reaction>
    <physiologicalReaction direction="left-to-right" evidence="10">
        <dbReference type="Rhea" id="RHEA:14410"/>
    </physiologicalReaction>
</comment>
<comment type="catalytic activity">
    <reaction evidence="6 7">
        <text>N-terminal L-cysteinyl-[protein] + O2 = N-terminal S-hydroxy-S-oxy-L-cysteinyl-[protein] + H(+)</text>
        <dbReference type="Rhea" id="RHEA:70895"/>
        <dbReference type="Rhea" id="RHEA-COMP:12707"/>
        <dbReference type="Rhea" id="RHEA-COMP:17973"/>
        <dbReference type="ChEBI" id="CHEBI:15378"/>
        <dbReference type="ChEBI" id="CHEBI:15379"/>
        <dbReference type="ChEBI" id="CHEBI:65250"/>
        <dbReference type="ChEBI" id="CHEBI:156254"/>
    </reaction>
    <physiologicalReaction direction="left-to-right" evidence="11">
        <dbReference type="Rhea" id="RHEA:70896"/>
    </physiologicalReaction>
</comment>
<comment type="cofactor">
    <cofactor evidence="8">
        <name>Fe cation</name>
        <dbReference type="ChEBI" id="CHEBI:24875"/>
    </cofactor>
</comment>
<comment type="biophysicochemical properties">
    <kinetics>
        <KM evidence="5">3.4 mM for cysteamine</KM>
        <KM evidence="6">123 uM for RGS4</KM>
        <KM evidence="6">71.51 uM for RGS5</KM>
        <KM evidence="6">33.6 uM for IL32</KM>
    </kinetics>
</comment>
<comment type="subunit">
    <text evidence="8">Monomer.</text>
</comment>
<comment type="interaction">
    <interactant intactId="EBI-11102284">
        <id>Q96SZ5</id>
    </interactant>
    <interactant intactId="EBI-1051165">
        <id>P40123</id>
        <label>CAP2</label>
    </interactant>
    <organismsDiffer>false</organismsDiffer>
    <experiments>3</experiments>
</comment>
<comment type="interaction">
    <interactant intactId="EBI-11102284">
        <id>Q96SZ5</id>
    </interactant>
    <interactant intactId="EBI-11988027">
        <id>Q9NRI5-2</id>
        <label>DISC1</label>
    </interactant>
    <organismsDiffer>false</organismsDiffer>
    <experiments>3</experiments>
</comment>
<comment type="interaction">
    <interactant intactId="EBI-11102284">
        <id>Q96SZ5</id>
    </interactant>
    <interactant intactId="EBI-751192">
        <id>Q5HYJ3</id>
        <label>FAM76B</label>
    </interactant>
    <organismsDiffer>false</organismsDiffer>
    <experiments>2</experiments>
</comment>
<comment type="sequence caution" evidence="9">
    <conflict type="erroneous initiation">
        <sequence resource="EMBL-CDS" id="BAB55123"/>
    </conflict>
    <text>Truncated N-terminus.</text>
</comment>
<protein>
    <recommendedName>
        <fullName>2-aminoethanethiol dioxygenase</fullName>
        <ecNumber evidence="4 5 7">1.13.11.19</ecNumber>
    </recommendedName>
    <alternativeName>
        <fullName>Cysteamine dioxygenase</fullName>
    </alternativeName>
</protein>
<name>AEDO_HUMAN</name>
<keyword id="KW-0002">3D-structure</keyword>
<keyword id="KW-0223">Dioxygenase</keyword>
<keyword id="KW-0408">Iron</keyword>
<keyword id="KW-0479">Metal-binding</keyword>
<keyword id="KW-0560">Oxidoreductase</keyword>
<keyword id="KW-1267">Proteomics identification</keyword>
<keyword id="KW-1185">Reference proteome</keyword>
<keyword id="KW-0883">Thioether bond</keyword>
<reference key="1">
    <citation type="journal article" date="2004" name="Nature">
        <title>The DNA sequence and comparative analysis of human chromosome 10.</title>
        <authorList>
            <person name="Deloukas P."/>
            <person name="Earthrowl M.E."/>
            <person name="Grafham D.V."/>
            <person name="Rubenfield M."/>
            <person name="French L."/>
            <person name="Steward C.A."/>
            <person name="Sims S.K."/>
            <person name="Jones M.C."/>
            <person name="Searle S."/>
            <person name="Scott C."/>
            <person name="Howe K."/>
            <person name="Hunt S.E."/>
            <person name="Andrews T.D."/>
            <person name="Gilbert J.G.R."/>
            <person name="Swarbreck D."/>
            <person name="Ashurst J.L."/>
            <person name="Taylor A."/>
            <person name="Battles J."/>
            <person name="Bird C.P."/>
            <person name="Ainscough R."/>
            <person name="Almeida J.P."/>
            <person name="Ashwell R.I.S."/>
            <person name="Ambrose K.D."/>
            <person name="Babbage A.K."/>
            <person name="Bagguley C.L."/>
            <person name="Bailey J."/>
            <person name="Banerjee R."/>
            <person name="Bates K."/>
            <person name="Beasley H."/>
            <person name="Bray-Allen S."/>
            <person name="Brown A.J."/>
            <person name="Brown J.Y."/>
            <person name="Burford D.C."/>
            <person name="Burrill W."/>
            <person name="Burton J."/>
            <person name="Cahill P."/>
            <person name="Camire D."/>
            <person name="Carter N.P."/>
            <person name="Chapman J.C."/>
            <person name="Clark S.Y."/>
            <person name="Clarke G."/>
            <person name="Clee C.M."/>
            <person name="Clegg S."/>
            <person name="Corby N."/>
            <person name="Coulson A."/>
            <person name="Dhami P."/>
            <person name="Dutta I."/>
            <person name="Dunn M."/>
            <person name="Faulkner L."/>
            <person name="Frankish A."/>
            <person name="Frankland J.A."/>
            <person name="Garner P."/>
            <person name="Garnett J."/>
            <person name="Gribble S."/>
            <person name="Griffiths C."/>
            <person name="Grocock R."/>
            <person name="Gustafson E."/>
            <person name="Hammond S."/>
            <person name="Harley J.L."/>
            <person name="Hart E."/>
            <person name="Heath P.D."/>
            <person name="Ho T.P."/>
            <person name="Hopkins B."/>
            <person name="Horne J."/>
            <person name="Howden P.J."/>
            <person name="Huckle E."/>
            <person name="Hynds C."/>
            <person name="Johnson C."/>
            <person name="Johnson D."/>
            <person name="Kana A."/>
            <person name="Kay M."/>
            <person name="Kimberley A.M."/>
            <person name="Kershaw J.K."/>
            <person name="Kokkinaki M."/>
            <person name="Laird G.K."/>
            <person name="Lawlor S."/>
            <person name="Lee H.M."/>
            <person name="Leongamornlert D.A."/>
            <person name="Laird G."/>
            <person name="Lloyd C."/>
            <person name="Lloyd D.M."/>
            <person name="Loveland J."/>
            <person name="Lovell J."/>
            <person name="McLaren S."/>
            <person name="McLay K.E."/>
            <person name="McMurray A."/>
            <person name="Mashreghi-Mohammadi M."/>
            <person name="Matthews L."/>
            <person name="Milne S."/>
            <person name="Nickerson T."/>
            <person name="Nguyen M."/>
            <person name="Overton-Larty E."/>
            <person name="Palmer S.A."/>
            <person name="Pearce A.V."/>
            <person name="Peck A.I."/>
            <person name="Pelan S."/>
            <person name="Phillimore B."/>
            <person name="Porter K."/>
            <person name="Rice C.M."/>
            <person name="Rogosin A."/>
            <person name="Ross M.T."/>
            <person name="Sarafidou T."/>
            <person name="Sehra H.K."/>
            <person name="Shownkeen R."/>
            <person name="Skuce C.D."/>
            <person name="Smith M."/>
            <person name="Standring L."/>
            <person name="Sycamore N."/>
            <person name="Tester J."/>
            <person name="Thorpe A."/>
            <person name="Torcasso W."/>
            <person name="Tracey A."/>
            <person name="Tromans A."/>
            <person name="Tsolas J."/>
            <person name="Wall M."/>
            <person name="Walsh J."/>
            <person name="Wang H."/>
            <person name="Weinstock K."/>
            <person name="West A.P."/>
            <person name="Willey D.L."/>
            <person name="Whitehead S.L."/>
            <person name="Wilming L."/>
            <person name="Wray P.W."/>
            <person name="Young L."/>
            <person name="Chen Y."/>
            <person name="Lovering R.C."/>
            <person name="Moschonas N.K."/>
            <person name="Siebert R."/>
            <person name="Fechtel K."/>
            <person name="Bentley D."/>
            <person name="Durbin R.M."/>
            <person name="Hubbard T."/>
            <person name="Doucette-Stamm L."/>
            <person name="Beck S."/>
            <person name="Smith D.R."/>
            <person name="Rogers J."/>
        </authorList>
    </citation>
    <scope>NUCLEOTIDE SEQUENCE [LARGE SCALE GENOMIC DNA]</scope>
</reference>
<reference key="2">
    <citation type="submission" date="2005-07" db="EMBL/GenBank/DDBJ databases">
        <authorList>
            <person name="Mural R.J."/>
            <person name="Istrail S."/>
            <person name="Sutton G.G."/>
            <person name="Florea L."/>
            <person name="Halpern A.L."/>
            <person name="Mobarry C.M."/>
            <person name="Lippert R."/>
            <person name="Walenz B."/>
            <person name="Shatkay H."/>
            <person name="Dew I."/>
            <person name="Miller J.R."/>
            <person name="Flanigan M.J."/>
            <person name="Edwards N.J."/>
            <person name="Bolanos R."/>
            <person name="Fasulo D."/>
            <person name="Halldorsson B.V."/>
            <person name="Hannenhalli S."/>
            <person name="Turner R."/>
            <person name="Yooseph S."/>
            <person name="Lu F."/>
            <person name="Nusskern D.R."/>
            <person name="Shue B.C."/>
            <person name="Zheng X.H."/>
            <person name="Zhong F."/>
            <person name="Delcher A.L."/>
            <person name="Huson D.H."/>
            <person name="Kravitz S.A."/>
            <person name="Mouchard L."/>
            <person name="Reinert K."/>
            <person name="Remington K.A."/>
            <person name="Clark A.G."/>
            <person name="Waterman M.S."/>
            <person name="Eichler E.E."/>
            <person name="Adams M.D."/>
            <person name="Hunkapiller M.W."/>
            <person name="Myers E.W."/>
            <person name="Venter J.C."/>
        </authorList>
    </citation>
    <scope>NUCLEOTIDE SEQUENCE [LARGE SCALE GENOMIC DNA]</scope>
</reference>
<reference key="3">
    <citation type="journal article" date="2004" name="Genome Res.">
        <title>The status, quality, and expansion of the NIH full-length cDNA project: the Mammalian Gene Collection (MGC).</title>
        <authorList>
            <consortium name="The MGC Project Team"/>
        </authorList>
    </citation>
    <scope>NUCLEOTIDE SEQUENCE [LARGE SCALE MRNA]</scope>
    <scope>VARIANTS TRP-25 AND ALA-39</scope>
    <source>
        <tissue>Brain</tissue>
        <tissue>Testis</tissue>
    </source>
</reference>
<reference key="4">
    <citation type="journal article" date="2004" name="Nat. Genet.">
        <title>Complete sequencing and characterization of 21,243 full-length human cDNAs.</title>
        <authorList>
            <person name="Ota T."/>
            <person name="Suzuki Y."/>
            <person name="Nishikawa T."/>
            <person name="Otsuki T."/>
            <person name="Sugiyama T."/>
            <person name="Irie R."/>
            <person name="Wakamatsu A."/>
            <person name="Hayashi K."/>
            <person name="Sato H."/>
            <person name="Nagai K."/>
            <person name="Kimura K."/>
            <person name="Makita H."/>
            <person name="Sekine M."/>
            <person name="Obayashi M."/>
            <person name="Nishi T."/>
            <person name="Shibahara T."/>
            <person name="Tanaka T."/>
            <person name="Ishii S."/>
            <person name="Yamamoto J."/>
            <person name="Saito K."/>
            <person name="Kawai Y."/>
            <person name="Isono Y."/>
            <person name="Nakamura Y."/>
            <person name="Nagahari K."/>
            <person name="Murakami K."/>
            <person name="Yasuda T."/>
            <person name="Iwayanagi T."/>
            <person name="Wagatsuma M."/>
            <person name="Shiratori A."/>
            <person name="Sudo H."/>
            <person name="Hosoiri T."/>
            <person name="Kaku Y."/>
            <person name="Kodaira H."/>
            <person name="Kondo H."/>
            <person name="Sugawara M."/>
            <person name="Takahashi M."/>
            <person name="Kanda K."/>
            <person name="Yokoi T."/>
            <person name="Furuya T."/>
            <person name="Kikkawa E."/>
            <person name="Omura Y."/>
            <person name="Abe K."/>
            <person name="Kamihara K."/>
            <person name="Katsuta N."/>
            <person name="Sato K."/>
            <person name="Tanikawa M."/>
            <person name="Yamazaki M."/>
            <person name="Ninomiya K."/>
            <person name="Ishibashi T."/>
            <person name="Yamashita H."/>
            <person name="Murakawa K."/>
            <person name="Fujimori K."/>
            <person name="Tanai H."/>
            <person name="Kimata M."/>
            <person name="Watanabe M."/>
            <person name="Hiraoka S."/>
            <person name="Chiba Y."/>
            <person name="Ishida S."/>
            <person name="Ono Y."/>
            <person name="Takiguchi S."/>
            <person name="Watanabe S."/>
            <person name="Yosida M."/>
            <person name="Hotuta T."/>
            <person name="Kusano J."/>
            <person name="Kanehori K."/>
            <person name="Takahashi-Fujii A."/>
            <person name="Hara H."/>
            <person name="Tanase T.-O."/>
            <person name="Nomura Y."/>
            <person name="Togiya S."/>
            <person name="Komai F."/>
            <person name="Hara R."/>
            <person name="Takeuchi K."/>
            <person name="Arita M."/>
            <person name="Imose N."/>
            <person name="Musashino K."/>
            <person name="Yuuki H."/>
            <person name="Oshima A."/>
            <person name="Sasaki N."/>
            <person name="Aotsuka S."/>
            <person name="Yoshikawa Y."/>
            <person name="Matsunawa H."/>
            <person name="Ichihara T."/>
            <person name="Shiohata N."/>
            <person name="Sano S."/>
            <person name="Moriya S."/>
            <person name="Momiyama H."/>
            <person name="Satoh N."/>
            <person name="Takami S."/>
            <person name="Terashima Y."/>
            <person name="Suzuki O."/>
            <person name="Nakagawa S."/>
            <person name="Senoh A."/>
            <person name="Mizoguchi H."/>
            <person name="Goto Y."/>
            <person name="Shimizu F."/>
            <person name="Wakebe H."/>
            <person name="Hishigaki H."/>
            <person name="Watanabe T."/>
            <person name="Sugiyama A."/>
            <person name="Takemoto M."/>
            <person name="Kawakami B."/>
            <person name="Yamazaki M."/>
            <person name="Watanabe K."/>
            <person name="Kumagai A."/>
            <person name="Itakura S."/>
            <person name="Fukuzumi Y."/>
            <person name="Fujimori Y."/>
            <person name="Komiyama M."/>
            <person name="Tashiro H."/>
            <person name="Tanigami A."/>
            <person name="Fujiwara T."/>
            <person name="Ono T."/>
            <person name="Yamada K."/>
            <person name="Fujii Y."/>
            <person name="Ozaki K."/>
            <person name="Hirao M."/>
            <person name="Ohmori Y."/>
            <person name="Kawabata A."/>
            <person name="Hikiji T."/>
            <person name="Kobatake N."/>
            <person name="Inagaki H."/>
            <person name="Ikema Y."/>
            <person name="Okamoto S."/>
            <person name="Okitani R."/>
            <person name="Kawakami T."/>
            <person name="Noguchi S."/>
            <person name="Itoh T."/>
            <person name="Shigeta K."/>
            <person name="Senba T."/>
            <person name="Matsumura K."/>
            <person name="Nakajima Y."/>
            <person name="Mizuno T."/>
            <person name="Morinaga M."/>
            <person name="Sasaki M."/>
            <person name="Togashi T."/>
            <person name="Oyama M."/>
            <person name="Hata H."/>
            <person name="Watanabe M."/>
            <person name="Komatsu T."/>
            <person name="Mizushima-Sugano J."/>
            <person name="Satoh T."/>
            <person name="Shirai Y."/>
            <person name="Takahashi Y."/>
            <person name="Nakagawa K."/>
            <person name="Okumura K."/>
            <person name="Nagase T."/>
            <person name="Nomura N."/>
            <person name="Kikuchi H."/>
            <person name="Masuho Y."/>
            <person name="Yamashita R."/>
            <person name="Nakai K."/>
            <person name="Yada T."/>
            <person name="Nakamura Y."/>
            <person name="Ohara O."/>
            <person name="Isogai T."/>
            <person name="Sugano S."/>
        </authorList>
    </citation>
    <scope>NUCLEOTIDE SEQUENCE [LARGE SCALE MRNA] OF 35-270</scope>
    <scope>VARIANT ALA-39</scope>
    <source>
        <tissue>Teratocarcinoma</tissue>
    </source>
</reference>
<reference key="5">
    <citation type="journal article" date="2007" name="J. Biol. Chem.">
        <title>Discovery and characterization of a second mammalian thiol dioxygenase, cysteamine dioxygenase.</title>
        <authorList>
            <person name="Dominy J.E. Jr."/>
            <person name="Simmons C.R."/>
            <person name="Hirschberger L.L."/>
            <person name="Hwang J."/>
            <person name="Coloso R.M."/>
            <person name="Stipanuk M.H."/>
        </authorList>
    </citation>
    <scope>FUNCTION</scope>
    <scope>CATALYTIC ACTIVITY</scope>
</reference>
<reference key="6">
    <citation type="journal article" date="2011" name="BMC Syst. Biol.">
        <title>Initial characterization of the human central proteome.</title>
        <authorList>
            <person name="Burkard T.R."/>
            <person name="Planyavsky M."/>
            <person name="Kaupe I."/>
            <person name="Breitwieser F.P."/>
            <person name="Buerckstuemmer T."/>
            <person name="Bennett K.L."/>
            <person name="Superti-Furga G."/>
            <person name="Colinge J."/>
        </authorList>
    </citation>
    <scope>IDENTIFICATION BY MASS SPECTROMETRY [LARGE SCALE ANALYSIS]</scope>
</reference>
<reference key="7">
    <citation type="journal article" date="2018" name="Angew. Chem. Int. Ed.">
        <title>Cofactor Biogenesis in Cysteamine Dioxygenase: C-F Bond Cleavage with Genetically Incorporated Unnatural Tyrosine.</title>
        <authorList>
            <person name="Wang Y."/>
            <person name="Griffith W.P."/>
            <person name="Li J."/>
            <person name="Koto T."/>
            <person name="Wherritt D.J."/>
            <person name="Fritz E."/>
            <person name="Liu A."/>
        </authorList>
    </citation>
    <scope>FUNCTION</scope>
    <scope>CATALYTIC ACTIVITY</scope>
    <scope>BIOPHYSICOCHEMICAL PROPERTIES</scope>
    <scope>CROSS-LINK</scope>
    <scope>MUTAGENESIS OF TYR-87; TYR-222 AND TYR-223</scope>
</reference>
<reference key="8">
    <citation type="journal article" date="2019" name="Science">
        <title>Conserved N-terminal cysteine dioxygenases transduce responses to hypoxia in animals and plants.</title>
        <authorList>
            <person name="Masson N."/>
            <person name="Keeley T.P."/>
            <person name="Giuntoli B."/>
            <person name="White M.D."/>
            <person name="Puerta M.L."/>
            <person name="Perata P."/>
            <person name="Hopkinson R.J."/>
            <person name="Flashman E."/>
            <person name="Licausi F."/>
            <person name="Ratcliffe P.J."/>
        </authorList>
    </citation>
    <scope>FUNCTION</scope>
    <scope>CATALYTIC ACTIVITY</scope>
    <scope>BIOPHYSICOCHEMICAL PROPERTIES</scope>
</reference>
<reference key="9">
    <citation type="journal article" date="2020" name="J. Biol. Chem.">
        <title>Characterization of the nonheme iron center of cysteamine dioxygenase and its interaction with substrates.</title>
        <authorList>
            <person name="Wang Y."/>
            <person name="Davis I."/>
            <person name="Chan Y."/>
            <person name="Naik S.G."/>
            <person name="Griffith W.P."/>
            <person name="Liu A."/>
        </authorList>
    </citation>
    <scope>FUNCTION</scope>
    <scope>CATALYTIC ACTIVITY</scope>
</reference>
<reference evidence="12" key="10">
    <citation type="journal article" date="2021" name="J. Biol. Chem.">
        <title>Crystal structure of human cysteamine dioxygenase provides a structural rationale for its function as an oxygen sensor.</title>
        <authorList>
            <person name="Wang Y."/>
            <person name="Shin I."/>
            <person name="Li J."/>
            <person name="Liu A."/>
        </authorList>
    </citation>
    <scope>X-RAY CRYSTALLOGRAPHY (1.78 ANGSTROMS) OF MUTANTS SER-18/SER-239 IN COMPLEX WITH NICKEL</scope>
    <scope>SUBUNIT</scope>
    <scope>COFACTOR</scope>
    <scope>IRON-BINDING SITES</scope>
</reference>